<comment type="function">
    <text evidence="1">Inhibits angiotensin-converting enzyme (ACE) with a Ki of 1.2 uM, targets B1 bradykinin receptors (BDKRB1), and potentiates the smooth muscle contraction elicited by bradykinin. In vivo, induces hyperalgesic effects in living rats after intraplantar injection.</text>
</comment>
<comment type="subcellular location">
    <subcellularLocation>
        <location>Secreted</location>
    </subcellularLocation>
</comment>
<comment type="tissue specificity">
    <text>Expressed by the venom gland.</text>
</comment>
<comment type="mass spectrometry">
    <text>Monoisotopic mass.</text>
</comment>
<comment type="miscellaneous">
    <text evidence="4">Is hydrolyzed by angiotensin-converting enzyme (ACE) by only 7.5% (compared to bradykinin).</text>
</comment>
<comment type="miscellaneous">
    <text evidence="4">Not able to contract smooth muscle preparation (ileum).</text>
</comment>
<comment type="similarity">
    <text evidence="3">Belongs to the bradykinin-related peptide family.</text>
</comment>
<accession>P0DL32</accession>
<name>BRKF_CYPDO</name>
<dbReference type="GO" id="GO:0005576">
    <property type="term" value="C:extracellular region"/>
    <property type="evidence" value="ECO:0007669"/>
    <property type="project" value="UniProtKB-SubCell"/>
</dbReference>
<dbReference type="GO" id="GO:0090729">
    <property type="term" value="F:toxin activity"/>
    <property type="evidence" value="ECO:0007669"/>
    <property type="project" value="UniProtKB-KW"/>
</dbReference>
<sequence>SIVLRGKAPFR</sequence>
<feature type="peptide" id="PRO_0000424141" description="Fulvonin">
    <location>
        <begin position="1"/>
        <end position="11"/>
    </location>
</feature>
<reference key="1">
    <citation type="journal article" date="2010" name="Biochem. Pharmacol.">
        <title>Bradykinin-related peptides in the venom of the solitary wasp Cyphononyx fulvognathus.</title>
        <authorList>
            <person name="Picolo G."/>
            <person name="Hisada M."/>
            <person name="Moura A.B."/>
            <person name="Machado M.F."/>
            <person name="Sciani J.M."/>
            <person name="Conceicao I.M."/>
            <person name="Melo R.L."/>
            <person name="Oliveira V."/>
            <person name="Lima-Landman M.T."/>
            <person name="Cury Y."/>
            <person name="Konno K."/>
            <person name="Hayashi M.A."/>
        </authorList>
    </citation>
    <scope>PROTEIN SEQUENCE</scope>
    <scope>SYNTHESIS</scope>
    <scope>FUNCTION</scope>
    <scope>BIOASSAY</scope>
    <scope>MASS SPECTROMETRY</scope>
    <source>
        <tissue>Venom</tissue>
    </source>
</reference>
<reference key="2">
    <citation type="journal article" date="2016" name="Toxins">
        <title>Peptide toxins in solitary wasp venoms.</title>
        <authorList>
            <person name="Konno K."/>
            <person name="Kazuma K."/>
            <person name="Nihei K."/>
        </authorList>
    </citation>
    <scope>REVIEW</scope>
</reference>
<proteinExistence type="evidence at protein level"/>
<organism>
    <name type="scientific">Cyphononyx dorsalis</name>
    <name type="common">Spider wasp</name>
    <name type="synonym">Cyphononyx fulvognathus</name>
    <dbReference type="NCBI Taxonomy" id="246266"/>
    <lineage>
        <taxon>Eukaryota</taxon>
        <taxon>Metazoa</taxon>
        <taxon>Ecdysozoa</taxon>
        <taxon>Arthropoda</taxon>
        <taxon>Hexapoda</taxon>
        <taxon>Insecta</taxon>
        <taxon>Pterygota</taxon>
        <taxon>Neoptera</taxon>
        <taxon>Endopterygota</taxon>
        <taxon>Hymenoptera</taxon>
        <taxon>Apocrita</taxon>
        <taxon>Aculeata</taxon>
        <taxon>Pompiloidea</taxon>
        <taxon>Pompilidae</taxon>
        <taxon>Pepsinae</taxon>
        <taxon>Cyphononyx</taxon>
    </lineage>
</organism>
<keyword id="KW-1222">Bradykinin receptor impairing toxin</keyword>
<keyword id="KW-0903">Direct protein sequencing</keyword>
<keyword id="KW-1213">G-protein coupled receptor impairing toxin</keyword>
<keyword id="KW-0964">Secreted</keyword>
<keyword id="KW-0800">Toxin</keyword>
<evidence type="ECO:0000269" key="1">
    <source>
    </source>
</evidence>
<evidence type="ECO:0000303" key="2">
    <source>
    </source>
</evidence>
<evidence type="ECO:0000305" key="3"/>
<evidence type="ECO:0000305" key="4">
    <source>
    </source>
</evidence>
<protein>
    <recommendedName>
        <fullName evidence="2">Fulvonin</fullName>
    </recommendedName>
    <alternativeName>
        <fullName evidence="2">Bradykinin-related peptide</fullName>
    </alternativeName>
</protein>